<proteinExistence type="evidence at protein level"/>
<gene>
    <name type="primary">GRIK5</name>
    <name type="synonym">GRIK2</name>
</gene>
<keyword id="KW-0025">Alternative splicing</keyword>
<keyword id="KW-1003">Cell membrane</keyword>
<keyword id="KW-0966">Cell projection</keyword>
<keyword id="KW-1015">Disulfide bond</keyword>
<keyword id="KW-0325">Glycoprotein</keyword>
<keyword id="KW-0407">Ion channel</keyword>
<keyword id="KW-0406">Ion transport</keyword>
<keyword id="KW-1071">Ligand-gated ion channel</keyword>
<keyword id="KW-0472">Membrane</keyword>
<keyword id="KW-0628">Postsynaptic cell membrane</keyword>
<keyword id="KW-1267">Proteomics identification</keyword>
<keyword id="KW-0675">Receptor</keyword>
<keyword id="KW-1185">Reference proteome</keyword>
<keyword id="KW-0732">Signal</keyword>
<keyword id="KW-0770">Synapse</keyword>
<keyword id="KW-0812">Transmembrane</keyword>
<keyword id="KW-1133">Transmembrane helix</keyword>
<keyword id="KW-0813">Transport</keyword>
<name>GRIK5_HUMAN</name>
<accession>Q16478</accession>
<accession>Q8WWG8</accession>
<dbReference type="EMBL" id="S40369">
    <property type="protein sequence ID" value="AAB22591.1"/>
    <property type="molecule type" value="mRNA"/>
</dbReference>
<dbReference type="EMBL" id="AJ249209">
    <property type="protein sequence ID" value="CAC80547.1"/>
    <property type="molecule type" value="mRNA"/>
</dbReference>
<dbReference type="EMBL" id="CH471126">
    <property type="protein sequence ID" value="EAW57090.1"/>
    <property type="molecule type" value="Genomic_DNA"/>
</dbReference>
<dbReference type="CCDS" id="CCDS12595.1">
    <molecule id="Q16478-1"/>
</dbReference>
<dbReference type="CCDS" id="CCDS77305.1">
    <molecule id="Q16478-2"/>
</dbReference>
<dbReference type="PIR" id="I57936">
    <property type="entry name" value="I57936"/>
</dbReference>
<dbReference type="RefSeq" id="NP_001287959.1">
    <molecule id="Q16478-2"/>
    <property type="nucleotide sequence ID" value="NM_001301030.2"/>
</dbReference>
<dbReference type="RefSeq" id="NP_002079.3">
    <molecule id="Q16478-1"/>
    <property type="nucleotide sequence ID" value="NM_002088.4"/>
</dbReference>
<dbReference type="RefSeq" id="XP_005258878.1">
    <property type="nucleotide sequence ID" value="XM_005258821.3"/>
</dbReference>
<dbReference type="RefSeq" id="XP_011525165.1">
    <property type="nucleotide sequence ID" value="XM_011526863.2"/>
</dbReference>
<dbReference type="SMR" id="Q16478"/>
<dbReference type="BioGRID" id="109158">
    <property type="interactions" value="16"/>
</dbReference>
<dbReference type="ComplexPortal" id="CPX-8503">
    <property type="entry name" value="GLUK2-GLUK5 glutamate ionotropic kainate-type receptor complex"/>
</dbReference>
<dbReference type="ComplexPortal" id="CPX-8521">
    <property type="entry name" value="GLUK3-GLUK5 glutamate ionotropic kainate-type receptor complex"/>
</dbReference>
<dbReference type="ComplexPortal" id="CPX-8522">
    <property type="entry name" value="GLUK1-GLUK5 glutamate ionotropic kainate-type receptor complex"/>
</dbReference>
<dbReference type="ComplexPortal" id="CPX-8525">
    <property type="entry name" value="GLUK1-GLUK2-GLUK5 glutamate ionotropic kainate-type receptor complex"/>
</dbReference>
<dbReference type="ComplexPortal" id="CPX-8555">
    <property type="entry name" value="GLUK1-GLUK3-GLUK5 glutamate ionotropic kainate-type receptor complex"/>
</dbReference>
<dbReference type="ComplexPortal" id="CPX-8556">
    <property type="entry name" value="GLUK1-GLUK2-GLUK3-GLUK5 glutamate ionotropic kainate-type receptor complex"/>
</dbReference>
<dbReference type="CORUM" id="Q16478"/>
<dbReference type="FunCoup" id="Q16478">
    <property type="interactions" value="462"/>
</dbReference>
<dbReference type="IntAct" id="Q16478">
    <property type="interactions" value="6"/>
</dbReference>
<dbReference type="STRING" id="9606.ENSP00000301218"/>
<dbReference type="BindingDB" id="Q16478"/>
<dbReference type="ChEMBL" id="CHEMBL2675"/>
<dbReference type="DrugBank" id="DB00237">
    <property type="generic name" value="Butabarbital"/>
</dbReference>
<dbReference type="DrugBank" id="DB00142">
    <property type="generic name" value="Glutamic acid"/>
</dbReference>
<dbReference type="DrugBank" id="DB00273">
    <property type="generic name" value="Topiramate"/>
</dbReference>
<dbReference type="DrugCentral" id="Q16478"/>
<dbReference type="TCDB" id="1.A.10.1.28">
    <property type="family name" value="the glutamate-gated ion channel (gic) family of neurotransmitter receptors"/>
</dbReference>
<dbReference type="GlyCosmos" id="Q16478">
    <property type="glycosylation" value="11 sites, No reported glycans"/>
</dbReference>
<dbReference type="GlyGen" id="Q16478">
    <property type="glycosylation" value="12 sites, 1 N-linked glycan (1 site)"/>
</dbReference>
<dbReference type="iPTMnet" id="Q16478"/>
<dbReference type="PhosphoSitePlus" id="Q16478"/>
<dbReference type="SwissPalm" id="Q16478"/>
<dbReference type="BioMuta" id="GRIK5"/>
<dbReference type="DMDM" id="209572626"/>
<dbReference type="jPOST" id="Q16478"/>
<dbReference type="MassIVE" id="Q16478"/>
<dbReference type="PaxDb" id="9606-ENSP00000262895"/>
<dbReference type="PeptideAtlas" id="Q16478"/>
<dbReference type="Antibodypedia" id="30879">
    <property type="antibodies" value="226 antibodies from 33 providers"/>
</dbReference>
<dbReference type="DNASU" id="2901"/>
<dbReference type="Ensembl" id="ENST00000262895.7">
    <molecule id="Q16478-1"/>
    <property type="protein sequence ID" value="ENSP00000262895.2"/>
    <property type="gene ID" value="ENSG00000105737.10"/>
</dbReference>
<dbReference type="Ensembl" id="ENST00000301218.8">
    <molecule id="Q16478-2"/>
    <property type="protein sequence ID" value="ENSP00000301218.3"/>
    <property type="gene ID" value="ENSG00000105737.10"/>
</dbReference>
<dbReference type="Ensembl" id="ENST00000593562.6">
    <molecule id="Q16478-1"/>
    <property type="protein sequence ID" value="ENSP00000470251.1"/>
    <property type="gene ID" value="ENSG00000105737.10"/>
</dbReference>
<dbReference type="GeneID" id="2901"/>
<dbReference type="KEGG" id="hsa:2901"/>
<dbReference type="MANE-Select" id="ENST00000593562.6">
    <property type="protein sequence ID" value="ENSP00000470251.1"/>
    <property type="RefSeq nucleotide sequence ID" value="NM_002088.5"/>
    <property type="RefSeq protein sequence ID" value="NP_002079.3"/>
</dbReference>
<dbReference type="UCSC" id="uc002osj.3">
    <molecule id="Q16478-1"/>
    <property type="organism name" value="human"/>
</dbReference>
<dbReference type="AGR" id="HGNC:4583"/>
<dbReference type="CTD" id="2901"/>
<dbReference type="DisGeNET" id="2901"/>
<dbReference type="GeneCards" id="GRIK5"/>
<dbReference type="HGNC" id="HGNC:4583">
    <property type="gene designation" value="GRIK5"/>
</dbReference>
<dbReference type="HPA" id="ENSG00000105737">
    <property type="expression patterns" value="Tissue enhanced (brain, testis)"/>
</dbReference>
<dbReference type="MIM" id="600283">
    <property type="type" value="gene"/>
</dbReference>
<dbReference type="neXtProt" id="NX_Q16478"/>
<dbReference type="OpenTargets" id="ENSG00000105737"/>
<dbReference type="PharmGKB" id="PA28977"/>
<dbReference type="VEuPathDB" id="HostDB:ENSG00000105737"/>
<dbReference type="eggNOG" id="KOG1052">
    <property type="taxonomic scope" value="Eukaryota"/>
</dbReference>
<dbReference type="GeneTree" id="ENSGT00940000158852"/>
<dbReference type="HOGENOM" id="CLU_007257_1_0_1"/>
<dbReference type="InParanoid" id="Q16478"/>
<dbReference type="OMA" id="ENCEASM"/>
<dbReference type="OrthoDB" id="5984008at2759"/>
<dbReference type="PAN-GO" id="Q16478">
    <property type="GO annotations" value="6 GO annotations based on evolutionary models"/>
</dbReference>
<dbReference type="PhylomeDB" id="Q16478"/>
<dbReference type="TreeFam" id="TF334668"/>
<dbReference type="PathwayCommons" id="Q16478"/>
<dbReference type="Reactome" id="R-HSA-451308">
    <property type="pathway name" value="Activation of Ca-permeable Kainate Receptor"/>
</dbReference>
<dbReference type="SignaLink" id="Q16478"/>
<dbReference type="SIGNOR" id="Q16478"/>
<dbReference type="BioGRID-ORCS" id="2901">
    <property type="hits" value="14 hits in 1151 CRISPR screens"/>
</dbReference>
<dbReference type="ChiTaRS" id="GRIK5">
    <property type="organism name" value="human"/>
</dbReference>
<dbReference type="GeneWiki" id="GRIK5"/>
<dbReference type="GenomeRNAi" id="2901"/>
<dbReference type="Pharos" id="Q16478">
    <property type="development level" value="Tclin"/>
</dbReference>
<dbReference type="PRO" id="PR:Q16478"/>
<dbReference type="Proteomes" id="UP000005640">
    <property type="component" value="Chromosome 19"/>
</dbReference>
<dbReference type="RNAct" id="Q16478">
    <property type="molecule type" value="protein"/>
</dbReference>
<dbReference type="Bgee" id="ENSG00000105737">
    <property type="expression patterns" value="Expressed in olfactory bulb and 183 other cell types or tissues"/>
</dbReference>
<dbReference type="ExpressionAtlas" id="Q16478">
    <property type="expression patterns" value="baseline and differential"/>
</dbReference>
<dbReference type="GO" id="GO:0042995">
    <property type="term" value="C:cell projection"/>
    <property type="evidence" value="ECO:0007669"/>
    <property type="project" value="UniProtKB-KW"/>
</dbReference>
<dbReference type="GO" id="GO:0005783">
    <property type="term" value="C:endoplasmic reticulum"/>
    <property type="evidence" value="ECO:0007669"/>
    <property type="project" value="Ensembl"/>
</dbReference>
<dbReference type="GO" id="GO:0098686">
    <property type="term" value="C:hippocampal mossy fiber to CA3 synapse"/>
    <property type="evidence" value="ECO:0007669"/>
    <property type="project" value="Ensembl"/>
</dbReference>
<dbReference type="GO" id="GO:0032983">
    <property type="term" value="C:kainate selective glutamate receptor complex"/>
    <property type="evidence" value="ECO:0000318"/>
    <property type="project" value="GO_Central"/>
</dbReference>
<dbReference type="GO" id="GO:0005654">
    <property type="term" value="C:nucleoplasm"/>
    <property type="evidence" value="ECO:0000314"/>
    <property type="project" value="HPA"/>
</dbReference>
<dbReference type="GO" id="GO:0005886">
    <property type="term" value="C:plasma membrane"/>
    <property type="evidence" value="ECO:0000314"/>
    <property type="project" value="HPA"/>
</dbReference>
<dbReference type="GO" id="GO:0098839">
    <property type="term" value="C:postsynaptic density membrane"/>
    <property type="evidence" value="ECO:0000318"/>
    <property type="project" value="GO_Central"/>
</dbReference>
<dbReference type="GO" id="GO:0042734">
    <property type="term" value="C:presynaptic membrane"/>
    <property type="evidence" value="ECO:0000318"/>
    <property type="project" value="GO_Central"/>
</dbReference>
<dbReference type="GO" id="GO:0015277">
    <property type="term" value="F:kainate selective glutamate receptor activity"/>
    <property type="evidence" value="ECO:0000314"/>
    <property type="project" value="UniProtKB"/>
</dbReference>
<dbReference type="GO" id="GO:0099507">
    <property type="term" value="F:ligand-gated monoatomic ion channel activity involved in regulation of presynaptic membrane potential"/>
    <property type="evidence" value="ECO:0000314"/>
    <property type="project" value="SynGO"/>
</dbReference>
<dbReference type="GO" id="GO:1904315">
    <property type="term" value="F:transmitter-gated monoatomic ion channel activity involved in regulation of postsynaptic membrane potential"/>
    <property type="evidence" value="ECO:0000318"/>
    <property type="project" value="GO_Central"/>
</dbReference>
<dbReference type="GO" id="GO:0060079">
    <property type="term" value="P:excitatory postsynaptic potential"/>
    <property type="evidence" value="ECO:0007669"/>
    <property type="project" value="Ensembl"/>
</dbReference>
<dbReference type="GO" id="GO:0050804">
    <property type="term" value="P:modulation of chemical synaptic transmission"/>
    <property type="evidence" value="ECO:0000318"/>
    <property type="project" value="GO_Central"/>
</dbReference>
<dbReference type="GO" id="GO:0031630">
    <property type="term" value="P:regulation of synaptic vesicle fusion to presynaptic active zone membrane"/>
    <property type="evidence" value="ECO:0007669"/>
    <property type="project" value="Ensembl"/>
</dbReference>
<dbReference type="GO" id="GO:0035249">
    <property type="term" value="P:synaptic transmission, glutamatergic"/>
    <property type="evidence" value="ECO:0000318"/>
    <property type="project" value="GO_Central"/>
</dbReference>
<dbReference type="CDD" id="cd06394">
    <property type="entry name" value="PBP1_iGluR_Kainate_KA1_2"/>
    <property type="match status" value="1"/>
</dbReference>
<dbReference type="FunFam" id="3.40.190.10:FF:000060">
    <property type="entry name" value="Glutamate receptor ionotropic, kainate 1"/>
    <property type="match status" value="1"/>
</dbReference>
<dbReference type="FunFam" id="3.40.190.10:FF:000072">
    <property type="entry name" value="glutamate receptor ionotropic, kainate 4"/>
    <property type="match status" value="1"/>
</dbReference>
<dbReference type="FunFam" id="3.40.50.2300:FF:000059">
    <property type="entry name" value="Glutamate receptor, ionotropic, kainate 4"/>
    <property type="match status" value="1"/>
</dbReference>
<dbReference type="FunFam" id="1.10.287.70:FF:000010">
    <property type="entry name" value="Putative glutamate receptor ionotropic kainate 1"/>
    <property type="match status" value="1"/>
</dbReference>
<dbReference type="Gene3D" id="3.40.50.2300">
    <property type="match status" value="2"/>
</dbReference>
<dbReference type="Gene3D" id="3.40.190.10">
    <property type="entry name" value="Periplasmic binding protein-like II"/>
    <property type="match status" value="3"/>
</dbReference>
<dbReference type="InterPro" id="IPR001828">
    <property type="entry name" value="ANF_lig-bd_rcpt"/>
</dbReference>
<dbReference type="InterPro" id="IPR019594">
    <property type="entry name" value="Glu/Gly-bd"/>
</dbReference>
<dbReference type="InterPro" id="IPR001508">
    <property type="entry name" value="Iono_Glu_rcpt_met"/>
</dbReference>
<dbReference type="InterPro" id="IPR015683">
    <property type="entry name" value="Ionotropic_Glu_rcpt"/>
</dbReference>
<dbReference type="InterPro" id="IPR001320">
    <property type="entry name" value="Iontro_rcpt_C"/>
</dbReference>
<dbReference type="InterPro" id="IPR028082">
    <property type="entry name" value="Peripla_BP_I"/>
</dbReference>
<dbReference type="PANTHER" id="PTHR18966">
    <property type="entry name" value="IONOTROPIC GLUTAMATE RECEPTOR"/>
    <property type="match status" value="1"/>
</dbReference>
<dbReference type="Pfam" id="PF01094">
    <property type="entry name" value="ANF_receptor"/>
    <property type="match status" value="1"/>
</dbReference>
<dbReference type="Pfam" id="PF00060">
    <property type="entry name" value="Lig_chan"/>
    <property type="match status" value="1"/>
</dbReference>
<dbReference type="Pfam" id="PF10613">
    <property type="entry name" value="Lig_chan-Glu_bd"/>
    <property type="match status" value="1"/>
</dbReference>
<dbReference type="PRINTS" id="PR00177">
    <property type="entry name" value="NMDARECEPTOR"/>
</dbReference>
<dbReference type="SMART" id="SM00918">
    <property type="entry name" value="Lig_chan-Glu_bd"/>
    <property type="match status" value="1"/>
</dbReference>
<dbReference type="SMART" id="SM00079">
    <property type="entry name" value="PBPe"/>
    <property type="match status" value="1"/>
</dbReference>
<dbReference type="SUPFAM" id="SSF53822">
    <property type="entry name" value="Periplasmic binding protein-like I"/>
    <property type="match status" value="1"/>
</dbReference>
<dbReference type="SUPFAM" id="SSF53850">
    <property type="entry name" value="Periplasmic binding protein-like II"/>
    <property type="match status" value="1"/>
</dbReference>
<reference key="1">
    <citation type="journal article" date="1992" name="Mol. Pharmacol.">
        <title>Molecular structure and pharmacological characterization of humEAA2, a novel human kainate receptor subunit.</title>
        <authorList>
            <person name="Kamboj R.K."/>
            <person name="Schoepp D.D."/>
            <person name="Nutt S."/>
            <person name="Shekter L."/>
            <person name="Korczak B."/>
            <person name="True R.A."/>
            <person name="Zimmerman D.M."/>
            <person name="Wosnick M.A."/>
        </authorList>
    </citation>
    <scope>NUCLEOTIDE SEQUENCE [MRNA] (ISOFORM 1)</scope>
    <scope>FUNCTION</scope>
    <source>
        <tissue>Hippocampus</tissue>
    </source>
</reference>
<reference key="2">
    <citation type="submission" date="1999-09" db="EMBL/GenBank/DDBJ databases">
        <title>Myeloid progenitor cell growth and apoptosis involves known and cell-specific ionotropic glutamate receptors.</title>
        <authorList>
            <person name="Langer A."/>
            <person name="Xu D."/>
            <person name="Kuehcke K."/>
            <person name="Fehse B."/>
            <person name="Abdallah S."/>
            <person name="Lother H."/>
        </authorList>
    </citation>
    <scope>NUCLEOTIDE SEQUENCE [MRNA] (ISOFORM 2)</scope>
    <source>
        <tissue>Erythroleukemia</tissue>
    </source>
</reference>
<reference key="3">
    <citation type="submission" date="2005-07" db="EMBL/GenBank/DDBJ databases">
        <authorList>
            <person name="Mural R.J."/>
            <person name="Istrail S."/>
            <person name="Sutton G.G."/>
            <person name="Florea L."/>
            <person name="Halpern A.L."/>
            <person name="Mobarry C.M."/>
            <person name="Lippert R."/>
            <person name="Walenz B."/>
            <person name="Shatkay H."/>
            <person name="Dew I."/>
            <person name="Miller J.R."/>
            <person name="Flanigan M.J."/>
            <person name="Edwards N.J."/>
            <person name="Bolanos R."/>
            <person name="Fasulo D."/>
            <person name="Halldorsson B.V."/>
            <person name="Hannenhalli S."/>
            <person name="Turner R."/>
            <person name="Yooseph S."/>
            <person name="Lu F."/>
            <person name="Nusskern D.R."/>
            <person name="Shue B.C."/>
            <person name="Zheng X.H."/>
            <person name="Zhong F."/>
            <person name="Delcher A.L."/>
            <person name="Huson D.H."/>
            <person name="Kravitz S.A."/>
            <person name="Mouchard L."/>
            <person name="Reinert K."/>
            <person name="Remington K.A."/>
            <person name="Clark A.G."/>
            <person name="Waterman M.S."/>
            <person name="Eichler E.E."/>
            <person name="Adams M.D."/>
            <person name="Hunkapiller M.W."/>
            <person name="Myers E.W."/>
            <person name="Venter J.C."/>
        </authorList>
    </citation>
    <scope>NUCLEOTIDE SEQUENCE [LARGE SCALE GENOMIC DNA]</scope>
</reference>
<reference key="4">
    <citation type="journal article" date="1996" name="J. Physiol. (Lond.)">
        <title>Effect of RNA editing and subunit co-assembly single-channel properties of recombinant kainate receptors.</title>
        <authorList>
            <person name="Swanson G.T."/>
            <person name="Feldmeyer D."/>
            <person name="Kaneda M."/>
            <person name="Cull-Candy S.G."/>
        </authorList>
    </citation>
    <scope>FUNCTION</scope>
    <scope>SUBUNIT</scope>
</reference>
<reference key="5">
    <citation type="journal article" date="2003" name="Biochem. Biophys. Res. Commun.">
        <title>Trafficking and surface expression of the glutamate receptor subunit, KA2.</title>
        <authorList>
            <person name="Hayes D.M."/>
            <person name="Braud S."/>
            <person name="Hurtado D.E."/>
            <person name="McCallum J."/>
            <person name="Standley S."/>
            <person name="Isaac J.T."/>
            <person name="Roche K.W."/>
        </authorList>
    </citation>
    <scope>FUNCTION</scope>
    <scope>SUBCELLULAR LOCATION</scope>
    <scope>MUTAGENESIS OF ARG-863 AND ARG-865</scope>
</reference>
<organism>
    <name type="scientific">Homo sapiens</name>
    <name type="common">Human</name>
    <dbReference type="NCBI Taxonomy" id="9606"/>
    <lineage>
        <taxon>Eukaryota</taxon>
        <taxon>Metazoa</taxon>
        <taxon>Chordata</taxon>
        <taxon>Craniata</taxon>
        <taxon>Vertebrata</taxon>
        <taxon>Euteleostomi</taxon>
        <taxon>Mammalia</taxon>
        <taxon>Eutheria</taxon>
        <taxon>Euarchontoglires</taxon>
        <taxon>Primates</taxon>
        <taxon>Haplorrhini</taxon>
        <taxon>Catarrhini</taxon>
        <taxon>Hominidae</taxon>
        <taxon>Homo</taxon>
    </lineage>
</organism>
<sequence>MPAELLLLLIVAFASPSCQVLSSLRMAAILDDQTVCGRGERLALALAREQINGIIEVPAKARVEVDIFELQRDSQYETTDTMCQILPKGVVSVLGPSSSPASASTVSHICGEKEIPHIKVGPEETPRLQYLRFASVSLYPSNEDVSLAVSRILKSFNYPSASLICAKAECLLRLEELVRGFLISKETLSVRMLDDSRDPTPLLKEIRDDKVSTIIIDANASISHLILRKASELGMTSAFYKYILTTMDFPILHLDGIVEDSSNILGFSMFNTSHPFYPEFVRSLNMSWRENCEASTYLGPALSAALMFDAVHVVVSAVRELNRSQEIGVKPLACTSANIWPHGTSLMNYLRMVEYDGLTGRVEFNSKGQRTNYTLRILEKSRQGHREIGVWYSNRTLAMNATTLDINLSQTLANKTLVVTTILENPYVMRRPNFQALSGNERFEGFCVDMLRELAELLRFRYRLRLVEDGLYGAPEPNGSWTGMVGELINRKADLAVAAFTITAEREKVIDFSKPFMTLGISILYRVHMGRKPGYFSFLDPFSPAVWLFMLLAYLAVSCVLFLAARLSPYEWYNPHPCLRARPHILENQYTLGNSLWFPVGGFMQQGSEIMPRALSTRCVSGVWWAFTLIIISSYTANLAAFLTVQRMEVPVESADDLADQTNIEYGTIHAGSTMTFFQNSRYQTYQRMWNYMQSKQPSVFVKSTEEGIARVLNSRYAFLLESTMNEYHRRLNCNLTQIGGLLDTKGYGIGMPLGSPFRDEITLAILQLQENNRLEILKRKWWEGGRCPKEEDHRAKGLGMENIGGIFIVLICGLIIAVFVAVMEFIWSTRRSAESEEVSVCQEMLQELRHAVSCRKTSRSRRRRRPGGPSRALLSLRAVREMRLSNGKLYSAGAGGDAGSAHGGPQRLLDDPGPPSGARPAAPTPCTHVRVCQECRRIQALRASGAGAPPRGLGVPAEATSPPRPRPGPAGPRELAEHE</sequence>
<comment type="function">
    <text evidence="2 5 6 7">Ionotropic glutamate receptor that functions as a cation-permeable ligand-gated ion channel, gated by L-glutamate and the glutamatergic agonist kainic acid. Cannot form functional channels on its own and produces channel activity only in heteromeric assembly with GRIK1 and GRIK2 subunits (PubMed:1321949, PubMed:14511640, PubMed:8730589). Can form functional heteromeric receptors with GRIK3 (By similarity).</text>
</comment>
<comment type="subunit">
    <text evidence="2 7">Homotetramer. Heterotetramer with GRIK2 (By similarity). Can form functional heteromeric receptors with GRIK1 and GRIK2 (PubMed:8730589). Can form functional heteromeric receptors with GRIK3 (By similarity).</text>
</comment>
<comment type="subcellular location">
    <subcellularLocation>
        <location evidence="6">Cell membrane</location>
        <topology evidence="3">Multi-pass membrane protein</topology>
    </subcellularLocation>
    <subcellularLocation>
        <location evidence="1">Postsynaptic cell membrane</location>
        <topology evidence="3">Multi-pass membrane protein</topology>
    </subcellularLocation>
    <subcellularLocation>
        <location evidence="1">Presynaptic cell membrane</location>
        <topology evidence="3">Multi-pass membrane protein</topology>
    </subcellularLocation>
    <text evidence="6">Association with GRIK2 is required for its cell membrane localization and channel activity.</text>
</comment>
<comment type="alternative products">
    <event type="alternative splicing"/>
    <isoform>
        <id>Q16478-1</id>
        <name>1</name>
        <sequence type="displayed"/>
    </isoform>
    <isoform>
        <id>Q16478-2</id>
        <name>2</name>
        <sequence type="described" ref="VSP_035585"/>
    </isoform>
</comment>
<comment type="similarity">
    <text evidence="9">Belongs to the glutamate-gated ion channel (TC 1.A.10.1) family. GRIK5 subfamily.</text>
</comment>
<feature type="signal peptide" evidence="3">
    <location>
        <begin position="1"/>
        <end position="14"/>
    </location>
</feature>
<feature type="chain" id="PRO_0000011552" description="Glutamate receptor ionotropic, kainate 5">
    <location>
        <begin position="15"/>
        <end position="980"/>
    </location>
</feature>
<feature type="topological domain" description="Extracellular" evidence="3">
    <location>
        <begin position="15"/>
        <end position="544"/>
    </location>
</feature>
<feature type="transmembrane region" description="Helical" evidence="3">
    <location>
        <begin position="545"/>
        <end position="565"/>
    </location>
</feature>
<feature type="topological domain" description="Cytoplasmic" evidence="3">
    <location>
        <begin position="566"/>
        <end position="622"/>
    </location>
</feature>
<feature type="transmembrane region" description="Helical" evidence="3">
    <location>
        <begin position="623"/>
        <end position="643"/>
    </location>
</feature>
<feature type="topological domain" description="Extracellular" evidence="3">
    <location>
        <begin position="644"/>
        <end position="803"/>
    </location>
</feature>
<feature type="transmembrane region" description="Helical" evidence="3">
    <location>
        <begin position="804"/>
        <end position="824"/>
    </location>
</feature>
<feature type="topological domain" description="Cytoplasmic" evidence="3">
    <location>
        <begin position="825"/>
        <end position="980"/>
    </location>
</feature>
<feature type="region of interest" description="Disordered" evidence="4">
    <location>
        <begin position="891"/>
        <end position="927"/>
    </location>
</feature>
<feature type="region of interest" description="Disordered" evidence="4">
    <location>
        <begin position="944"/>
        <end position="980"/>
    </location>
</feature>
<feature type="compositionally biased region" description="Gly residues" evidence="4">
    <location>
        <begin position="894"/>
        <end position="903"/>
    </location>
</feature>
<feature type="glycosylation site" description="N-linked (GlcNAc...) asparagine" evidence="3">
    <location>
        <position position="219"/>
    </location>
</feature>
<feature type="glycosylation site" description="N-linked (GlcNAc...) asparagine" evidence="3">
    <location>
        <position position="271"/>
    </location>
</feature>
<feature type="glycosylation site" description="N-linked (GlcNAc...) asparagine" evidence="3">
    <location>
        <position position="285"/>
    </location>
</feature>
<feature type="glycosylation site" description="N-linked (GlcNAc...) asparagine" evidence="3">
    <location>
        <position position="322"/>
    </location>
</feature>
<feature type="glycosylation site" description="N-linked (GlcNAc...) asparagine" evidence="3">
    <location>
        <position position="372"/>
    </location>
</feature>
<feature type="glycosylation site" description="N-linked (GlcNAc...) asparagine" evidence="3">
    <location>
        <position position="394"/>
    </location>
</feature>
<feature type="glycosylation site" description="N-linked (GlcNAc...) asparagine" evidence="3">
    <location>
        <position position="400"/>
    </location>
</feature>
<feature type="glycosylation site" description="N-linked (GlcNAc...) asparagine" evidence="3">
    <location>
        <position position="407"/>
    </location>
</feature>
<feature type="glycosylation site" description="N-linked (GlcNAc...) asparagine" evidence="3">
    <location>
        <position position="414"/>
    </location>
</feature>
<feature type="glycosylation site" description="N-linked (GlcNAc...) asparagine" evidence="3">
    <location>
        <position position="478"/>
    </location>
</feature>
<feature type="glycosylation site" description="N-linked (GlcNAc...) asparagine" evidence="3">
    <location>
        <position position="735"/>
    </location>
</feature>
<feature type="disulfide bond" evidence="2">
    <location>
        <begin position="36"/>
        <end position="292"/>
    </location>
</feature>
<feature type="disulfide bond" evidence="2">
    <location>
        <begin position="83"/>
        <end position="334"/>
    </location>
</feature>
<feature type="disulfide bond" evidence="2">
    <location>
        <begin position="165"/>
        <end position="170"/>
    </location>
</feature>
<feature type="splice variant" id="VSP_035585" description="In isoform 2." evidence="8">
    <original>VSVCQEMLQELRHAVSCRKTSRSRRRRRPGGPSRALLSLRAVREMRLSNGKLYSAGAGGDAGSAHGGPQRLLDDPGPPSGARPAAPTPCTHVRVCQECRRIQALRASGAGAPPRGLGVPAEATSPPRPRPGPAGPRELAEHE</original>
    <variation>TPALHPAACQCSALGPRTPLKEPSMLLVKVPSTRVQVAFSRTSLRQVCPFLLQHQLSSLYWIQATNVQICCHFSSLKPSPDLTFPPSHRPLSSLLFTALAAVGGLPDASSFFFPPISSCPPLQSGIGPCHSTEATLVTSNFHV</variation>
    <location>
        <begin position="839"/>
        <end position="980"/>
    </location>
</feature>
<feature type="mutagenesis site" description="Retained in the endoplasmic reticulum; when associated with E-865." evidence="6">
    <original>R</original>
    <variation>E</variation>
    <location>
        <position position="863"/>
    </location>
</feature>
<feature type="mutagenesis site" description="Retained in the endoplasmic reticulum; when associated with E-863." evidence="6">
    <original>R</original>
    <variation>E</variation>
    <location>
        <position position="865"/>
    </location>
</feature>
<feature type="sequence conflict" description="In Ref. 1; AAB22591." evidence="9" ref="1">
    <original>A</original>
    <variation>G</variation>
    <location>
        <position position="436"/>
    </location>
</feature>
<feature type="sequence conflict" description="In Ref. 1; AAB22591." evidence="9" ref="1">
    <original>RFR</original>
    <variation>PFP</variation>
    <location>
        <begin position="459"/>
        <end position="461"/>
    </location>
</feature>
<feature type="sequence conflict" description="In Ref. 1; AAB22591." evidence="9" ref="1">
    <original>R</original>
    <variation>A</variation>
    <location>
        <position position="711"/>
    </location>
</feature>
<evidence type="ECO:0000250" key="1">
    <source>
        <dbReference type="UniProtKB" id="Q61626"/>
    </source>
</evidence>
<evidence type="ECO:0000250" key="2">
    <source>
        <dbReference type="UniProtKB" id="Q63273"/>
    </source>
</evidence>
<evidence type="ECO:0000255" key="3"/>
<evidence type="ECO:0000256" key="4">
    <source>
        <dbReference type="SAM" id="MobiDB-lite"/>
    </source>
</evidence>
<evidence type="ECO:0000269" key="5">
    <source>
    </source>
</evidence>
<evidence type="ECO:0000269" key="6">
    <source>
    </source>
</evidence>
<evidence type="ECO:0000269" key="7">
    <source>
    </source>
</evidence>
<evidence type="ECO:0000303" key="8">
    <source ref="2"/>
</evidence>
<evidence type="ECO:0000305" key="9"/>
<protein>
    <recommendedName>
        <fullName>Glutamate receptor ionotropic, kainate 5</fullName>
        <shortName>GluK5</shortName>
    </recommendedName>
    <alternativeName>
        <fullName>Excitatory amino acid receptor 2</fullName>
        <shortName>EAA2</shortName>
    </alternativeName>
    <alternativeName>
        <fullName>Glutamate receptor KA-2</fullName>
        <shortName>KA2</shortName>
    </alternativeName>
</protein>